<gene>
    <name evidence="1" type="primary">dut</name>
    <name type="ordered locus">NAMH_0358</name>
</gene>
<dbReference type="EC" id="3.6.1.23" evidence="1"/>
<dbReference type="EMBL" id="CP001279">
    <property type="protein sequence ID" value="ACM92504.1"/>
    <property type="molecule type" value="Genomic_DNA"/>
</dbReference>
<dbReference type="RefSeq" id="WP_012663875.1">
    <property type="nucleotide sequence ID" value="NC_012115.1"/>
</dbReference>
<dbReference type="SMR" id="B9L823"/>
<dbReference type="STRING" id="598659.NAMH_0358"/>
<dbReference type="KEGG" id="nam:NAMH_0358"/>
<dbReference type="eggNOG" id="COG0756">
    <property type="taxonomic scope" value="Bacteria"/>
</dbReference>
<dbReference type="HOGENOM" id="CLU_068508_1_2_7"/>
<dbReference type="OrthoDB" id="9809956at2"/>
<dbReference type="UniPathway" id="UPA00610">
    <property type="reaction ID" value="UER00666"/>
</dbReference>
<dbReference type="Proteomes" id="UP000000448">
    <property type="component" value="Chromosome"/>
</dbReference>
<dbReference type="GO" id="GO:0004170">
    <property type="term" value="F:dUTP diphosphatase activity"/>
    <property type="evidence" value="ECO:0007669"/>
    <property type="project" value="UniProtKB-UniRule"/>
</dbReference>
<dbReference type="GO" id="GO:0000287">
    <property type="term" value="F:magnesium ion binding"/>
    <property type="evidence" value="ECO:0007669"/>
    <property type="project" value="UniProtKB-UniRule"/>
</dbReference>
<dbReference type="GO" id="GO:0006226">
    <property type="term" value="P:dUMP biosynthetic process"/>
    <property type="evidence" value="ECO:0007669"/>
    <property type="project" value="UniProtKB-UniRule"/>
</dbReference>
<dbReference type="GO" id="GO:0046081">
    <property type="term" value="P:dUTP catabolic process"/>
    <property type="evidence" value="ECO:0007669"/>
    <property type="project" value="InterPro"/>
</dbReference>
<dbReference type="CDD" id="cd07557">
    <property type="entry name" value="trimeric_dUTPase"/>
    <property type="match status" value="1"/>
</dbReference>
<dbReference type="Gene3D" id="2.70.40.10">
    <property type="match status" value="1"/>
</dbReference>
<dbReference type="HAMAP" id="MF_00116">
    <property type="entry name" value="dUTPase_bact"/>
    <property type="match status" value="1"/>
</dbReference>
<dbReference type="InterPro" id="IPR008181">
    <property type="entry name" value="dUTPase"/>
</dbReference>
<dbReference type="InterPro" id="IPR029054">
    <property type="entry name" value="dUTPase-like"/>
</dbReference>
<dbReference type="InterPro" id="IPR036157">
    <property type="entry name" value="dUTPase-like_sf"/>
</dbReference>
<dbReference type="InterPro" id="IPR033704">
    <property type="entry name" value="dUTPase_trimeric"/>
</dbReference>
<dbReference type="NCBIfam" id="TIGR00576">
    <property type="entry name" value="dut"/>
    <property type="match status" value="1"/>
</dbReference>
<dbReference type="NCBIfam" id="NF001862">
    <property type="entry name" value="PRK00601.1"/>
    <property type="match status" value="1"/>
</dbReference>
<dbReference type="PANTHER" id="PTHR11241">
    <property type="entry name" value="DEOXYURIDINE 5'-TRIPHOSPHATE NUCLEOTIDOHYDROLASE"/>
    <property type="match status" value="1"/>
</dbReference>
<dbReference type="PANTHER" id="PTHR11241:SF0">
    <property type="entry name" value="DEOXYURIDINE 5'-TRIPHOSPHATE NUCLEOTIDOHYDROLASE"/>
    <property type="match status" value="1"/>
</dbReference>
<dbReference type="Pfam" id="PF00692">
    <property type="entry name" value="dUTPase"/>
    <property type="match status" value="1"/>
</dbReference>
<dbReference type="SUPFAM" id="SSF51283">
    <property type="entry name" value="dUTPase-like"/>
    <property type="match status" value="1"/>
</dbReference>
<sequence>MKLKIKKLNQEALIPAYQTKEAAGFDLHSIEDVIIKPGERKLIGTGLAFEIEFGYEVQIRPRSGLAFKHGITVLNTPGTIDSDYRGEIKVLLINHSNEAFEIKKEERIAQAVIAPVVQAEIIEVEELSDTERGAGGFGSTGK</sequence>
<comment type="function">
    <text evidence="1">This enzyme is involved in nucleotide metabolism: it produces dUMP, the immediate precursor of thymidine nucleotides and it decreases the intracellular concentration of dUTP so that uracil cannot be incorporated into DNA.</text>
</comment>
<comment type="catalytic activity">
    <reaction evidence="1">
        <text>dUTP + H2O = dUMP + diphosphate + H(+)</text>
        <dbReference type="Rhea" id="RHEA:10248"/>
        <dbReference type="ChEBI" id="CHEBI:15377"/>
        <dbReference type="ChEBI" id="CHEBI:15378"/>
        <dbReference type="ChEBI" id="CHEBI:33019"/>
        <dbReference type="ChEBI" id="CHEBI:61555"/>
        <dbReference type="ChEBI" id="CHEBI:246422"/>
        <dbReference type="EC" id="3.6.1.23"/>
    </reaction>
</comment>
<comment type="cofactor">
    <cofactor evidence="1">
        <name>Mg(2+)</name>
        <dbReference type="ChEBI" id="CHEBI:18420"/>
    </cofactor>
</comment>
<comment type="pathway">
    <text evidence="1">Pyrimidine metabolism; dUMP biosynthesis; dUMP from dCTP (dUTP route): step 2/2.</text>
</comment>
<comment type="similarity">
    <text evidence="1">Belongs to the dUTPase family.</text>
</comment>
<name>DUT_NAUPA</name>
<feature type="chain" id="PRO_1000119244" description="Deoxyuridine 5'-triphosphate nucleotidohydrolase">
    <location>
        <begin position="1"/>
        <end position="142"/>
    </location>
</feature>
<feature type="binding site" evidence="1">
    <location>
        <begin position="62"/>
        <end position="64"/>
    </location>
    <ligand>
        <name>substrate</name>
    </ligand>
</feature>
<feature type="binding site" evidence="1">
    <location>
        <position position="75"/>
    </location>
    <ligand>
        <name>substrate</name>
    </ligand>
</feature>
<feature type="binding site" evidence="1">
    <location>
        <begin position="79"/>
        <end position="81"/>
    </location>
    <ligand>
        <name>substrate</name>
    </ligand>
</feature>
<feature type="binding site" evidence="1">
    <location>
        <position position="89"/>
    </location>
    <ligand>
        <name>substrate</name>
    </ligand>
</feature>
<accession>B9L823</accession>
<keyword id="KW-0378">Hydrolase</keyword>
<keyword id="KW-0460">Magnesium</keyword>
<keyword id="KW-0479">Metal-binding</keyword>
<keyword id="KW-0546">Nucleotide metabolism</keyword>
<reference key="1">
    <citation type="journal article" date="2009" name="PLoS Genet.">
        <title>Adaptations to submarine hydrothermal environments exemplified by the genome of Nautilia profundicola.</title>
        <authorList>
            <person name="Campbell B.J."/>
            <person name="Smith J.L."/>
            <person name="Hanson T.E."/>
            <person name="Klotz M.G."/>
            <person name="Stein L.Y."/>
            <person name="Lee C.K."/>
            <person name="Wu D."/>
            <person name="Robinson J.M."/>
            <person name="Khouri H.M."/>
            <person name="Eisen J.A."/>
            <person name="Cary S.C."/>
        </authorList>
    </citation>
    <scope>NUCLEOTIDE SEQUENCE [LARGE SCALE GENOMIC DNA]</scope>
    <source>
        <strain>ATCC BAA-1463 / DSM 18972 / AmH</strain>
    </source>
</reference>
<protein>
    <recommendedName>
        <fullName evidence="1">Deoxyuridine 5'-triphosphate nucleotidohydrolase</fullName>
        <shortName evidence="1">dUTPase</shortName>
        <ecNumber evidence="1">3.6.1.23</ecNumber>
    </recommendedName>
    <alternativeName>
        <fullName evidence="1">dUTP pyrophosphatase</fullName>
    </alternativeName>
</protein>
<proteinExistence type="inferred from homology"/>
<organism>
    <name type="scientific">Nautilia profundicola (strain ATCC BAA-1463 / DSM 18972 / AmH)</name>
    <dbReference type="NCBI Taxonomy" id="598659"/>
    <lineage>
        <taxon>Bacteria</taxon>
        <taxon>Pseudomonadati</taxon>
        <taxon>Campylobacterota</taxon>
        <taxon>Epsilonproteobacteria</taxon>
        <taxon>Nautiliales</taxon>
        <taxon>Nautiliaceae</taxon>
        <taxon>Nautilia</taxon>
    </lineage>
</organism>
<evidence type="ECO:0000255" key="1">
    <source>
        <dbReference type="HAMAP-Rule" id="MF_00116"/>
    </source>
</evidence>